<proteinExistence type="inferred from homology"/>
<keyword id="KW-0131">Cell cycle</keyword>
<keyword id="KW-0132">Cell division</keyword>
<keyword id="KW-0143">Chaperone</keyword>
<keyword id="KW-0963">Cytoplasm</keyword>
<keyword id="KW-0413">Isomerase</keyword>
<keyword id="KW-0697">Rotamase</keyword>
<gene>
    <name evidence="1" type="primary">tig</name>
    <name type="ordered locus">P9215_19281</name>
</gene>
<feature type="chain" id="PRO_1000059329" description="Trigger factor">
    <location>
        <begin position="1"/>
        <end position="476"/>
    </location>
</feature>
<feature type="domain" description="PPIase FKBP-type" evidence="1">
    <location>
        <begin position="174"/>
        <end position="261"/>
    </location>
</feature>
<feature type="region of interest" description="Disordered" evidence="2">
    <location>
        <begin position="436"/>
        <end position="476"/>
    </location>
</feature>
<feature type="compositionally biased region" description="Low complexity" evidence="2">
    <location>
        <begin position="440"/>
        <end position="469"/>
    </location>
</feature>
<sequence length="476" mass="53552">MAKEALIVKTTPLPQSRISFELEIPSETCKTCLNETISSISRSAKIPGFRVGKIPKQVLIQRIGITQLHASALEKIIDKSWQEALKIKSIEPLSEPELVDGFESVLANFSPEKPLKVTLQTDVAPELKLKKSKGLSVEISKTKFDPKSIDEALQKSRSQFANIIPVTNRAARLGDIAVVSFKGKYKDSDKEIDGGTSESMDLELEKNKMIPGFVEGIVKMKIGDTKTLNLKFPEDYSHEDSRGKEAIFEVNLKDLKEKELPELNDDFAKQSGNKESLKELKKDIEKQLKDNFEKTQKDIKIEALLDALTNELVAEIPKSMIDIEVRNNIEQTAQRFAQQGLDVKSTFTPELVKSLAESTRPQAEKNVQRNLALKALAETENIKVEKDEIDLKMKDYEDAISQSSKQIDIKKLTEVISNDLLKEKLIIWLEENSEVKENTTKTSKTTKNSKTTKATKTTKTTKTTKTSKTQNKKEKK</sequence>
<dbReference type="EC" id="5.2.1.8" evidence="1"/>
<dbReference type="EMBL" id="CP000825">
    <property type="protein sequence ID" value="ABV51541.1"/>
    <property type="molecule type" value="Genomic_DNA"/>
</dbReference>
<dbReference type="RefSeq" id="WP_012008531.1">
    <property type="nucleotide sequence ID" value="NC_009840.1"/>
</dbReference>
<dbReference type="SMR" id="A8G7G0"/>
<dbReference type="STRING" id="93060.P9215_19281"/>
<dbReference type="KEGG" id="pmh:P9215_19281"/>
<dbReference type="eggNOG" id="COG0544">
    <property type="taxonomic scope" value="Bacteria"/>
</dbReference>
<dbReference type="HOGENOM" id="CLU_033058_3_1_3"/>
<dbReference type="OrthoDB" id="9767721at2"/>
<dbReference type="Proteomes" id="UP000002014">
    <property type="component" value="Chromosome"/>
</dbReference>
<dbReference type="GO" id="GO:0005737">
    <property type="term" value="C:cytoplasm"/>
    <property type="evidence" value="ECO:0007669"/>
    <property type="project" value="UniProtKB-SubCell"/>
</dbReference>
<dbReference type="GO" id="GO:0003755">
    <property type="term" value="F:peptidyl-prolyl cis-trans isomerase activity"/>
    <property type="evidence" value="ECO:0007669"/>
    <property type="project" value="UniProtKB-UniRule"/>
</dbReference>
<dbReference type="GO" id="GO:0044183">
    <property type="term" value="F:protein folding chaperone"/>
    <property type="evidence" value="ECO:0007669"/>
    <property type="project" value="TreeGrafter"/>
</dbReference>
<dbReference type="GO" id="GO:0043022">
    <property type="term" value="F:ribosome binding"/>
    <property type="evidence" value="ECO:0007669"/>
    <property type="project" value="TreeGrafter"/>
</dbReference>
<dbReference type="GO" id="GO:0051083">
    <property type="term" value="P:'de novo' cotranslational protein folding"/>
    <property type="evidence" value="ECO:0007669"/>
    <property type="project" value="TreeGrafter"/>
</dbReference>
<dbReference type="GO" id="GO:0051301">
    <property type="term" value="P:cell division"/>
    <property type="evidence" value="ECO:0007669"/>
    <property type="project" value="UniProtKB-KW"/>
</dbReference>
<dbReference type="GO" id="GO:0061077">
    <property type="term" value="P:chaperone-mediated protein folding"/>
    <property type="evidence" value="ECO:0007669"/>
    <property type="project" value="TreeGrafter"/>
</dbReference>
<dbReference type="GO" id="GO:0015031">
    <property type="term" value="P:protein transport"/>
    <property type="evidence" value="ECO:0007669"/>
    <property type="project" value="UniProtKB-UniRule"/>
</dbReference>
<dbReference type="GO" id="GO:0043335">
    <property type="term" value="P:protein unfolding"/>
    <property type="evidence" value="ECO:0007669"/>
    <property type="project" value="TreeGrafter"/>
</dbReference>
<dbReference type="FunFam" id="3.10.50.40:FF:000001">
    <property type="entry name" value="Trigger factor"/>
    <property type="match status" value="1"/>
</dbReference>
<dbReference type="FunFam" id="3.30.70.1050:FF:000004">
    <property type="entry name" value="Trigger factor"/>
    <property type="match status" value="1"/>
</dbReference>
<dbReference type="Gene3D" id="3.10.50.40">
    <property type="match status" value="1"/>
</dbReference>
<dbReference type="Gene3D" id="3.30.70.1050">
    <property type="entry name" value="Trigger factor ribosome-binding domain"/>
    <property type="match status" value="1"/>
</dbReference>
<dbReference type="Gene3D" id="1.10.3120.10">
    <property type="entry name" value="Trigger factor, C-terminal domain"/>
    <property type="match status" value="1"/>
</dbReference>
<dbReference type="HAMAP" id="MF_00303">
    <property type="entry name" value="Trigger_factor_Tig"/>
    <property type="match status" value="1"/>
</dbReference>
<dbReference type="InterPro" id="IPR046357">
    <property type="entry name" value="PPIase_dom_sf"/>
</dbReference>
<dbReference type="InterPro" id="IPR001179">
    <property type="entry name" value="PPIase_FKBP_dom"/>
</dbReference>
<dbReference type="InterPro" id="IPR005215">
    <property type="entry name" value="Trig_fac"/>
</dbReference>
<dbReference type="InterPro" id="IPR008880">
    <property type="entry name" value="Trigger_fac_C"/>
</dbReference>
<dbReference type="InterPro" id="IPR037041">
    <property type="entry name" value="Trigger_fac_C_sf"/>
</dbReference>
<dbReference type="InterPro" id="IPR008881">
    <property type="entry name" value="Trigger_fac_ribosome-bd_bac"/>
</dbReference>
<dbReference type="InterPro" id="IPR036611">
    <property type="entry name" value="Trigger_fac_ribosome-bd_sf"/>
</dbReference>
<dbReference type="InterPro" id="IPR027304">
    <property type="entry name" value="Trigger_fact/SurA_dom_sf"/>
</dbReference>
<dbReference type="NCBIfam" id="TIGR00115">
    <property type="entry name" value="tig"/>
    <property type="match status" value="1"/>
</dbReference>
<dbReference type="PANTHER" id="PTHR30560">
    <property type="entry name" value="TRIGGER FACTOR CHAPERONE AND PEPTIDYL-PROLYL CIS/TRANS ISOMERASE"/>
    <property type="match status" value="1"/>
</dbReference>
<dbReference type="PANTHER" id="PTHR30560:SF3">
    <property type="entry name" value="TRIGGER FACTOR-LIKE PROTEIN TIG, CHLOROPLASTIC"/>
    <property type="match status" value="1"/>
</dbReference>
<dbReference type="Pfam" id="PF00254">
    <property type="entry name" value="FKBP_C"/>
    <property type="match status" value="1"/>
</dbReference>
<dbReference type="Pfam" id="PF05698">
    <property type="entry name" value="Trigger_C"/>
    <property type="match status" value="1"/>
</dbReference>
<dbReference type="Pfam" id="PF05697">
    <property type="entry name" value="Trigger_N"/>
    <property type="match status" value="1"/>
</dbReference>
<dbReference type="PIRSF" id="PIRSF003095">
    <property type="entry name" value="Trigger_factor"/>
    <property type="match status" value="1"/>
</dbReference>
<dbReference type="SUPFAM" id="SSF54534">
    <property type="entry name" value="FKBP-like"/>
    <property type="match status" value="1"/>
</dbReference>
<dbReference type="SUPFAM" id="SSF109998">
    <property type="entry name" value="Triger factor/SurA peptide-binding domain-like"/>
    <property type="match status" value="1"/>
</dbReference>
<dbReference type="SUPFAM" id="SSF102735">
    <property type="entry name" value="Trigger factor ribosome-binding domain"/>
    <property type="match status" value="1"/>
</dbReference>
<dbReference type="PROSITE" id="PS50059">
    <property type="entry name" value="FKBP_PPIASE"/>
    <property type="match status" value="1"/>
</dbReference>
<protein>
    <recommendedName>
        <fullName evidence="1">Trigger factor</fullName>
        <shortName evidence="1">TF</shortName>
        <ecNumber evidence="1">5.2.1.8</ecNumber>
    </recommendedName>
    <alternativeName>
        <fullName evidence="1">PPIase</fullName>
    </alternativeName>
</protein>
<accession>A8G7G0</accession>
<comment type="function">
    <text evidence="1">Involved in protein export. Acts as a chaperone by maintaining the newly synthesized protein in an open conformation. Functions as a peptidyl-prolyl cis-trans isomerase.</text>
</comment>
<comment type="catalytic activity">
    <reaction evidence="1">
        <text>[protein]-peptidylproline (omega=180) = [protein]-peptidylproline (omega=0)</text>
        <dbReference type="Rhea" id="RHEA:16237"/>
        <dbReference type="Rhea" id="RHEA-COMP:10747"/>
        <dbReference type="Rhea" id="RHEA-COMP:10748"/>
        <dbReference type="ChEBI" id="CHEBI:83833"/>
        <dbReference type="ChEBI" id="CHEBI:83834"/>
        <dbReference type="EC" id="5.2.1.8"/>
    </reaction>
</comment>
<comment type="subcellular location">
    <subcellularLocation>
        <location>Cytoplasm</location>
    </subcellularLocation>
    <text evidence="1">About half TF is bound to the ribosome near the polypeptide exit tunnel while the other half is free in the cytoplasm.</text>
</comment>
<comment type="domain">
    <text evidence="1">Consists of 3 domains; the N-terminus binds the ribosome, the middle domain has PPIase activity, while the C-terminus has intrinsic chaperone activity on its own.</text>
</comment>
<comment type="similarity">
    <text evidence="1">Belongs to the FKBP-type PPIase family. Tig subfamily.</text>
</comment>
<reference key="1">
    <citation type="journal article" date="2007" name="PLoS Genet.">
        <title>Patterns and implications of gene gain and loss in the evolution of Prochlorococcus.</title>
        <authorList>
            <person name="Kettler G.C."/>
            <person name="Martiny A.C."/>
            <person name="Huang K."/>
            <person name="Zucker J."/>
            <person name="Coleman M.L."/>
            <person name="Rodrigue S."/>
            <person name="Chen F."/>
            <person name="Lapidus A."/>
            <person name="Ferriera S."/>
            <person name="Johnson J."/>
            <person name="Steglich C."/>
            <person name="Church G.M."/>
            <person name="Richardson P."/>
            <person name="Chisholm S.W."/>
        </authorList>
    </citation>
    <scope>NUCLEOTIDE SEQUENCE [LARGE SCALE GENOMIC DNA]</scope>
    <source>
        <strain>MIT 9215</strain>
    </source>
</reference>
<evidence type="ECO:0000255" key="1">
    <source>
        <dbReference type="HAMAP-Rule" id="MF_00303"/>
    </source>
</evidence>
<evidence type="ECO:0000256" key="2">
    <source>
        <dbReference type="SAM" id="MobiDB-lite"/>
    </source>
</evidence>
<name>TIG_PROM2</name>
<organism>
    <name type="scientific">Prochlorococcus marinus (strain MIT 9215)</name>
    <dbReference type="NCBI Taxonomy" id="93060"/>
    <lineage>
        <taxon>Bacteria</taxon>
        <taxon>Bacillati</taxon>
        <taxon>Cyanobacteriota</taxon>
        <taxon>Cyanophyceae</taxon>
        <taxon>Synechococcales</taxon>
        <taxon>Prochlorococcaceae</taxon>
        <taxon>Prochlorococcus</taxon>
    </lineage>
</organism>